<accession>Q67147</accession>
<organismHost>
    <name type="scientific">Aves</name>
    <dbReference type="NCBI Taxonomy" id="8782"/>
</organismHost>
<organism>
    <name type="scientific">Influenza A virus (strain A/Shearwater/Australia/1972 H6N5)</name>
    <dbReference type="NCBI Taxonomy" id="383604"/>
    <lineage>
        <taxon>Viruses</taxon>
        <taxon>Riboviria</taxon>
        <taxon>Orthornavirae</taxon>
        <taxon>Negarnaviricota</taxon>
        <taxon>Polyploviricotina</taxon>
        <taxon>Insthoviricetes</taxon>
        <taxon>Articulavirales</taxon>
        <taxon>Orthomyxoviridae</taxon>
        <taxon>Alphainfluenzavirus</taxon>
        <taxon>Alphainfluenzavirus influenzae</taxon>
        <taxon>Influenza A virus</taxon>
    </lineage>
</organism>
<dbReference type="EMBL" id="L25831">
    <property type="protein sequence ID" value="AAA43250.1"/>
    <property type="molecule type" value="Genomic_RNA"/>
</dbReference>
<dbReference type="SMR" id="Q67147"/>
<dbReference type="Proteomes" id="UP000157292">
    <property type="component" value="Genome"/>
</dbReference>
<dbReference type="GO" id="GO:0042025">
    <property type="term" value="C:host cell nucleus"/>
    <property type="evidence" value="ECO:0007669"/>
    <property type="project" value="UniProtKB-SubCell"/>
</dbReference>
<dbReference type="GO" id="GO:0016020">
    <property type="term" value="C:membrane"/>
    <property type="evidence" value="ECO:0007669"/>
    <property type="project" value="UniProtKB-KW"/>
</dbReference>
<dbReference type="GO" id="GO:0055036">
    <property type="term" value="C:virion membrane"/>
    <property type="evidence" value="ECO:0007669"/>
    <property type="project" value="UniProtKB-SubCell"/>
</dbReference>
<dbReference type="GO" id="GO:0003723">
    <property type="term" value="F:RNA binding"/>
    <property type="evidence" value="ECO:0007669"/>
    <property type="project" value="UniProtKB-UniRule"/>
</dbReference>
<dbReference type="GO" id="GO:0039660">
    <property type="term" value="F:structural constituent of virion"/>
    <property type="evidence" value="ECO:0007669"/>
    <property type="project" value="UniProtKB-UniRule"/>
</dbReference>
<dbReference type="GO" id="GO:0046761">
    <property type="term" value="P:viral budding from plasma membrane"/>
    <property type="evidence" value="ECO:0007669"/>
    <property type="project" value="UniProtKB-UniRule"/>
</dbReference>
<dbReference type="FunFam" id="1.10.10.180:FF:000001">
    <property type="entry name" value="Matrix protein 1"/>
    <property type="match status" value="1"/>
</dbReference>
<dbReference type="FunFam" id="1.20.91.10:FF:000001">
    <property type="entry name" value="Matrix protein 1"/>
    <property type="match status" value="1"/>
</dbReference>
<dbReference type="Gene3D" id="1.10.10.180">
    <property type="match status" value="1"/>
</dbReference>
<dbReference type="Gene3D" id="1.20.91.10">
    <property type="match status" value="1"/>
</dbReference>
<dbReference type="HAMAP" id="MF_04068">
    <property type="entry name" value="INFV_M1"/>
    <property type="match status" value="1"/>
</dbReference>
<dbReference type="InterPro" id="IPR036039">
    <property type="entry name" value="Flu_matrix_M1"/>
</dbReference>
<dbReference type="InterPro" id="IPR013188">
    <property type="entry name" value="Flu_matrix_M1_C"/>
</dbReference>
<dbReference type="InterPro" id="IPR001561">
    <property type="entry name" value="Flu_matrix_M1_N"/>
</dbReference>
<dbReference type="InterPro" id="IPR015423">
    <property type="entry name" value="Flu_matrix_M1_N_sub1"/>
</dbReference>
<dbReference type="InterPro" id="IPR015799">
    <property type="entry name" value="Flu_matrix_M1_N_sub2"/>
</dbReference>
<dbReference type="InterPro" id="IPR037533">
    <property type="entry name" value="INFV_M1"/>
</dbReference>
<dbReference type="Pfam" id="PF00598">
    <property type="entry name" value="Flu_M1"/>
    <property type="match status" value="1"/>
</dbReference>
<dbReference type="Pfam" id="PF08289">
    <property type="entry name" value="Flu_M1_C"/>
    <property type="match status" value="1"/>
</dbReference>
<dbReference type="SMART" id="SM00759">
    <property type="entry name" value="Flu_M1_C"/>
    <property type="match status" value="1"/>
</dbReference>
<dbReference type="SUPFAM" id="SSF48145">
    <property type="entry name" value="Influenza virus matrix protein M1"/>
    <property type="match status" value="1"/>
</dbReference>
<feature type="chain" id="PRO_0000326295" description="Matrix protein 1">
    <location>
        <begin position="1"/>
        <end position="252"/>
    </location>
</feature>
<feature type="region of interest" description="Membrane-binding" evidence="1">
    <location>
        <begin position="1"/>
        <end position="164"/>
    </location>
</feature>
<feature type="region of interest" description="RNP-binding" evidence="1">
    <location>
        <begin position="165"/>
        <end position="252"/>
    </location>
</feature>
<feature type="short sequence motif" description="Nuclear localization signal" evidence="1">
    <location>
        <begin position="101"/>
        <end position="105"/>
    </location>
</feature>
<keyword id="KW-0025">Alternative splicing</keyword>
<keyword id="KW-1048">Host nucleus</keyword>
<keyword id="KW-0472">Membrane</keyword>
<keyword id="KW-0694">RNA-binding</keyword>
<keyword id="KW-0468">Viral matrix protein</keyword>
<keyword id="KW-0946">Virion</keyword>
<evidence type="ECO:0000255" key="1">
    <source>
        <dbReference type="HAMAP-Rule" id="MF_04068"/>
    </source>
</evidence>
<protein>
    <recommendedName>
        <fullName evidence="1">Matrix protein 1</fullName>
        <shortName evidence="1">M1</shortName>
    </recommendedName>
</protein>
<reference key="1">
    <citation type="submission" date="1993-11" db="EMBL/GenBank/DDBJ databases">
        <title>Sequence of the matrix protein gene of Influenza A/Shearwater/Australia/1/72.</title>
        <authorList>
            <person name="Ward A.C."/>
            <person name="Harley V.R."/>
        </authorList>
    </citation>
    <scope>NUCLEOTIDE SEQUENCE [GENOMIC RNA]</scope>
</reference>
<sequence>MSLLTEVETYVLSIVPSGPLKAEIAQRLEDVFAGKNTDLEALMEWLKTRPILSPLTKGILGFVFTLTVPSERGLQRRRFVQNALNGNGDPNNMDRAVKLYRKLKREITFHGAKDVALSYSTGALASCMGLIYNRMGTVTTEVAFGLVCATCEQIADSQHRSHRQMMTTTNPLIRHENRMVLASTTAKAMEQMAGSSEQAAEAMEVASQARQMVQAMRTIGTHPSSSAGLKDDLLENLQAYQKRMGVQIQRFK</sequence>
<name>M1_I72A5</name>
<comment type="function">
    <text evidence="1">Plays critical roles in virus replication, from virus entry and uncoating to assembly and budding of the virus particle. M1 binding to ribonucleocapsids (RNPs) in nucleus seems to inhibit viral transcription. Interaction of viral NEP with M1-RNP is thought to promote nuclear export of the complex, which is targeted to the virion assembly site at the apical plasma membrane in polarized epithelial cells. Interactions with NA and HA may bring M1, a non-raft-associated protein, into lipid rafts. Forms a continuous shell on the inner side of the lipid bilayer in virion, where it binds the RNP. During virus entry into cell, the M2 ion channel acidifies the internal virion core, inducing M1 dissociation from the RNP. M1-free RNPs are transported to the nucleus, where viral transcription and replication can take place.</text>
</comment>
<comment type="function">
    <text evidence="1">Determines the virion's shape: spherical or filamentous. Clinical isolates of influenza are characterized by the presence of significant proportion of filamentous virions, whereas after multiple passage on eggs or cell culture, virions have only spherical morphology. Filamentous virions are thought to be important to infect neighboring cells, and spherical virions more suited to spread through aerosol between hosts organisms.</text>
</comment>
<comment type="subunit">
    <text evidence="1">Homodimer and homomultimer. Interacts with NEP. Binds ribonucleocapsid by both interacting with genomic RNA and NP protein. May interact with HA and NA. Cannot bind NP without genomic RNA.</text>
</comment>
<comment type="subcellular location">
    <subcellularLocation>
        <location evidence="1">Virion membrane</location>
        <topology evidence="1">Peripheral membrane protein</topology>
        <orientation evidence="1">Cytoplasmic side</orientation>
    </subcellularLocation>
    <subcellularLocation>
        <location evidence="1">Host nucleus</location>
    </subcellularLocation>
</comment>
<comment type="alternative products">
    <event type="alternative splicing"/>
    <isoform>
        <id>Q67147-1</id>
        <name>M1</name>
        <sequence type="displayed"/>
    </isoform>
    <isoform>
        <id>Q67146-1</id>
        <name>M2</name>
        <sequence type="external"/>
    </isoform>
    <text>Only the first 9 residues are shared by the 2 isoforms.</text>
</comment>
<comment type="miscellaneous">
    <text evidence="1">Most abundant protein in virion. When expressed alone can form virus-like particles in transfected cells.</text>
</comment>
<comment type="similarity">
    <text evidence="1">Belongs to the influenza viruses Matrix protein M1 family.</text>
</comment>
<proteinExistence type="inferred from homology"/>
<gene>
    <name evidence="1" type="primary">M</name>
</gene>